<name>LPXK_BRASO</name>
<proteinExistence type="inferred from homology"/>
<protein>
    <recommendedName>
        <fullName evidence="1">Tetraacyldisaccharide 4'-kinase</fullName>
        <ecNumber evidence="1">2.7.1.130</ecNumber>
    </recommendedName>
    <alternativeName>
        <fullName evidence="1">Lipid A 4'-kinase</fullName>
    </alternativeName>
</protein>
<comment type="function">
    <text evidence="1">Transfers the gamma-phosphate of ATP to the 4'-position of a tetraacyldisaccharide 1-phosphate intermediate (termed DS-1-P) to form tetraacyldisaccharide 1,4'-bis-phosphate (lipid IVA).</text>
</comment>
<comment type="catalytic activity">
    <reaction evidence="1">
        <text>a lipid A disaccharide + ATP = a lipid IVA + ADP + H(+)</text>
        <dbReference type="Rhea" id="RHEA:67840"/>
        <dbReference type="ChEBI" id="CHEBI:15378"/>
        <dbReference type="ChEBI" id="CHEBI:30616"/>
        <dbReference type="ChEBI" id="CHEBI:176343"/>
        <dbReference type="ChEBI" id="CHEBI:176425"/>
        <dbReference type="ChEBI" id="CHEBI:456216"/>
        <dbReference type="EC" id="2.7.1.130"/>
    </reaction>
</comment>
<comment type="pathway">
    <text evidence="1">Glycolipid biosynthesis; lipid IV(A) biosynthesis; lipid IV(A) from (3R)-3-hydroxytetradecanoyl-[acyl-carrier-protein] and UDP-N-acetyl-alpha-D-glucosamine: step 6/6.</text>
</comment>
<comment type="similarity">
    <text evidence="1">Belongs to the LpxK family.</text>
</comment>
<keyword id="KW-0067">ATP-binding</keyword>
<keyword id="KW-0418">Kinase</keyword>
<keyword id="KW-0441">Lipid A biosynthesis</keyword>
<keyword id="KW-0444">Lipid biosynthesis</keyword>
<keyword id="KW-0443">Lipid metabolism</keyword>
<keyword id="KW-0547">Nucleotide-binding</keyword>
<keyword id="KW-1185">Reference proteome</keyword>
<keyword id="KW-0808">Transferase</keyword>
<feature type="chain" id="PRO_1000080460" description="Tetraacyldisaccharide 4'-kinase">
    <location>
        <begin position="1"/>
        <end position="335"/>
    </location>
</feature>
<feature type="binding site" evidence="1">
    <location>
        <begin position="51"/>
        <end position="58"/>
    </location>
    <ligand>
        <name>ATP</name>
        <dbReference type="ChEBI" id="CHEBI:30616"/>
    </ligand>
</feature>
<organism>
    <name type="scientific">Bradyrhizobium sp. (strain ORS 278)</name>
    <dbReference type="NCBI Taxonomy" id="114615"/>
    <lineage>
        <taxon>Bacteria</taxon>
        <taxon>Pseudomonadati</taxon>
        <taxon>Pseudomonadota</taxon>
        <taxon>Alphaproteobacteria</taxon>
        <taxon>Hyphomicrobiales</taxon>
        <taxon>Nitrobacteraceae</taxon>
        <taxon>Bradyrhizobium</taxon>
    </lineage>
</organism>
<dbReference type="EC" id="2.7.1.130" evidence="1"/>
<dbReference type="EMBL" id="CU234118">
    <property type="protein sequence ID" value="CAL79747.1"/>
    <property type="molecule type" value="Genomic_DNA"/>
</dbReference>
<dbReference type="RefSeq" id="WP_012029638.1">
    <property type="nucleotide sequence ID" value="NC_009445.1"/>
</dbReference>
<dbReference type="SMR" id="A4Z0S1"/>
<dbReference type="STRING" id="114615.BRADO6095"/>
<dbReference type="KEGG" id="bra:BRADO6095"/>
<dbReference type="eggNOG" id="COG1663">
    <property type="taxonomic scope" value="Bacteria"/>
</dbReference>
<dbReference type="HOGENOM" id="CLU_038816_0_0_5"/>
<dbReference type="OrthoDB" id="9766423at2"/>
<dbReference type="UniPathway" id="UPA00359">
    <property type="reaction ID" value="UER00482"/>
</dbReference>
<dbReference type="Proteomes" id="UP000001994">
    <property type="component" value="Chromosome"/>
</dbReference>
<dbReference type="GO" id="GO:0005886">
    <property type="term" value="C:plasma membrane"/>
    <property type="evidence" value="ECO:0007669"/>
    <property type="project" value="TreeGrafter"/>
</dbReference>
<dbReference type="GO" id="GO:0005524">
    <property type="term" value="F:ATP binding"/>
    <property type="evidence" value="ECO:0007669"/>
    <property type="project" value="UniProtKB-UniRule"/>
</dbReference>
<dbReference type="GO" id="GO:0009029">
    <property type="term" value="F:tetraacyldisaccharide 4'-kinase activity"/>
    <property type="evidence" value="ECO:0007669"/>
    <property type="project" value="UniProtKB-UniRule"/>
</dbReference>
<dbReference type="GO" id="GO:0009245">
    <property type="term" value="P:lipid A biosynthetic process"/>
    <property type="evidence" value="ECO:0007669"/>
    <property type="project" value="UniProtKB-UniRule"/>
</dbReference>
<dbReference type="GO" id="GO:0009244">
    <property type="term" value="P:lipopolysaccharide core region biosynthetic process"/>
    <property type="evidence" value="ECO:0007669"/>
    <property type="project" value="TreeGrafter"/>
</dbReference>
<dbReference type="HAMAP" id="MF_00409">
    <property type="entry name" value="LpxK"/>
    <property type="match status" value="1"/>
</dbReference>
<dbReference type="InterPro" id="IPR003758">
    <property type="entry name" value="LpxK"/>
</dbReference>
<dbReference type="InterPro" id="IPR027417">
    <property type="entry name" value="P-loop_NTPase"/>
</dbReference>
<dbReference type="NCBIfam" id="TIGR00682">
    <property type="entry name" value="lpxK"/>
    <property type="match status" value="1"/>
</dbReference>
<dbReference type="PANTHER" id="PTHR42724">
    <property type="entry name" value="TETRAACYLDISACCHARIDE 4'-KINASE"/>
    <property type="match status" value="1"/>
</dbReference>
<dbReference type="PANTHER" id="PTHR42724:SF1">
    <property type="entry name" value="TETRAACYLDISACCHARIDE 4'-KINASE, MITOCHONDRIAL-RELATED"/>
    <property type="match status" value="1"/>
</dbReference>
<dbReference type="Pfam" id="PF02606">
    <property type="entry name" value="LpxK"/>
    <property type="match status" value="1"/>
</dbReference>
<dbReference type="SUPFAM" id="SSF52540">
    <property type="entry name" value="P-loop containing nucleoside triphosphate hydrolases"/>
    <property type="match status" value="1"/>
</dbReference>
<gene>
    <name evidence="1" type="primary">lpxK</name>
    <name type="ordered locus">BRADO6095</name>
</gene>
<reference key="1">
    <citation type="journal article" date="2007" name="Science">
        <title>Legumes symbioses: absence of nod genes in photosynthetic bradyrhizobia.</title>
        <authorList>
            <person name="Giraud E."/>
            <person name="Moulin L."/>
            <person name="Vallenet D."/>
            <person name="Barbe V."/>
            <person name="Cytryn E."/>
            <person name="Avarre J.-C."/>
            <person name="Jaubert M."/>
            <person name="Simon D."/>
            <person name="Cartieaux F."/>
            <person name="Prin Y."/>
            <person name="Bena G."/>
            <person name="Hannibal L."/>
            <person name="Fardoux J."/>
            <person name="Kojadinovic M."/>
            <person name="Vuillet L."/>
            <person name="Lajus A."/>
            <person name="Cruveiller S."/>
            <person name="Rouy Z."/>
            <person name="Mangenot S."/>
            <person name="Segurens B."/>
            <person name="Dossat C."/>
            <person name="Franck W.L."/>
            <person name="Chang W.-S."/>
            <person name="Saunders E."/>
            <person name="Bruce D."/>
            <person name="Richardson P."/>
            <person name="Normand P."/>
            <person name="Dreyfus B."/>
            <person name="Pignol D."/>
            <person name="Stacey G."/>
            <person name="Emerich D."/>
            <person name="Vermeglio A."/>
            <person name="Medigue C."/>
            <person name="Sadowsky M."/>
        </authorList>
    </citation>
    <scope>NUCLEOTIDE SEQUENCE [LARGE SCALE GENOMIC DNA]</scope>
    <source>
        <strain>ORS 278</strain>
    </source>
</reference>
<evidence type="ECO:0000255" key="1">
    <source>
        <dbReference type="HAMAP-Rule" id="MF_00409"/>
    </source>
</evidence>
<accession>A4Z0S1</accession>
<sequence length="335" mass="35392">MREPAFWHRPPSWQSHLLSPLSMLYGAVAARRMAQPGIKAGVPVICVGNYHVGGAGKTPTVLALTALLRGQGEQPVVLSRGYGGRLPGPVLVDPAAHGAADVGDEPLMMAAHVPVVVSRARADGVGLAKAHRASVILMDDGFQNPSITKDLALIVVDGGRGLGNARVFPAGPLRTPLPPQLARTDALMIIGRGEAGEAVASRVAAAGKPVFRAQLQPDAGVVASLAGRPLLAFAGIGDPQRFFRSLRASGLEIRAERPFPDHHPFTDGDIKALVDQATREQLALVTTEKDLVRLRGRGWDHPELAPMAFPVTLQFDDETAVRSLVARRLSAARAS</sequence>